<keyword id="KW-1185">Reference proteome</keyword>
<keyword id="KW-0687">Ribonucleoprotein</keyword>
<keyword id="KW-0689">Ribosomal protein</keyword>
<organism>
    <name type="scientific">Picosynechococcus sp. (strain ATCC 27264 / PCC 7002 / PR-6)</name>
    <name type="common">Agmenellum quadruplicatum</name>
    <dbReference type="NCBI Taxonomy" id="32049"/>
    <lineage>
        <taxon>Bacteria</taxon>
        <taxon>Bacillati</taxon>
        <taxon>Cyanobacteriota</taxon>
        <taxon>Cyanophyceae</taxon>
        <taxon>Oscillatoriophycideae</taxon>
        <taxon>Chroococcales</taxon>
        <taxon>Geminocystaceae</taxon>
        <taxon>Picosynechococcus</taxon>
    </lineage>
</organism>
<protein>
    <recommendedName>
        <fullName evidence="1">Large ribosomal subunit protein bL12</fullName>
    </recommendedName>
    <alternativeName>
        <fullName evidence="2">50S ribosomal protein L7/L12</fullName>
    </alternativeName>
</protein>
<dbReference type="EMBL" id="CP000951">
    <property type="protein sequence ID" value="ACA99029.1"/>
    <property type="molecule type" value="Genomic_DNA"/>
</dbReference>
<dbReference type="RefSeq" id="WP_012306653.1">
    <property type="nucleotide sequence ID" value="NZ_JAHHPU010000001.1"/>
</dbReference>
<dbReference type="SMR" id="B1XJG9"/>
<dbReference type="STRING" id="32049.SYNPCC7002_A1026"/>
<dbReference type="KEGG" id="syp:SYNPCC7002_A1026"/>
<dbReference type="eggNOG" id="COG0222">
    <property type="taxonomic scope" value="Bacteria"/>
</dbReference>
<dbReference type="HOGENOM" id="CLU_086499_3_0_3"/>
<dbReference type="Proteomes" id="UP000001688">
    <property type="component" value="Chromosome"/>
</dbReference>
<dbReference type="GO" id="GO:0022625">
    <property type="term" value="C:cytosolic large ribosomal subunit"/>
    <property type="evidence" value="ECO:0007669"/>
    <property type="project" value="TreeGrafter"/>
</dbReference>
<dbReference type="GO" id="GO:0003729">
    <property type="term" value="F:mRNA binding"/>
    <property type="evidence" value="ECO:0007669"/>
    <property type="project" value="TreeGrafter"/>
</dbReference>
<dbReference type="GO" id="GO:0003735">
    <property type="term" value="F:structural constituent of ribosome"/>
    <property type="evidence" value="ECO:0007669"/>
    <property type="project" value="InterPro"/>
</dbReference>
<dbReference type="GO" id="GO:0006412">
    <property type="term" value="P:translation"/>
    <property type="evidence" value="ECO:0007669"/>
    <property type="project" value="UniProtKB-UniRule"/>
</dbReference>
<dbReference type="CDD" id="cd00387">
    <property type="entry name" value="Ribosomal_L7_L12"/>
    <property type="match status" value="1"/>
</dbReference>
<dbReference type="FunFam" id="3.30.1390.10:FF:000001">
    <property type="entry name" value="50S ribosomal protein L7/L12"/>
    <property type="match status" value="1"/>
</dbReference>
<dbReference type="Gene3D" id="3.30.1390.10">
    <property type="match status" value="1"/>
</dbReference>
<dbReference type="Gene3D" id="1.20.5.710">
    <property type="entry name" value="Single helix bin"/>
    <property type="match status" value="1"/>
</dbReference>
<dbReference type="HAMAP" id="MF_00368">
    <property type="entry name" value="Ribosomal_bL12"/>
    <property type="match status" value="1"/>
</dbReference>
<dbReference type="InterPro" id="IPR000206">
    <property type="entry name" value="Ribosomal_bL12"/>
</dbReference>
<dbReference type="InterPro" id="IPR013823">
    <property type="entry name" value="Ribosomal_bL12_C"/>
</dbReference>
<dbReference type="InterPro" id="IPR014719">
    <property type="entry name" value="Ribosomal_bL12_C/ClpS-like"/>
</dbReference>
<dbReference type="InterPro" id="IPR008932">
    <property type="entry name" value="Ribosomal_bL12_oligo"/>
</dbReference>
<dbReference type="InterPro" id="IPR036235">
    <property type="entry name" value="Ribosomal_bL12_oligo_N_sf"/>
</dbReference>
<dbReference type="NCBIfam" id="TIGR00855">
    <property type="entry name" value="L12"/>
    <property type="match status" value="1"/>
</dbReference>
<dbReference type="PANTHER" id="PTHR45987">
    <property type="entry name" value="39S RIBOSOMAL PROTEIN L12"/>
    <property type="match status" value="1"/>
</dbReference>
<dbReference type="PANTHER" id="PTHR45987:SF4">
    <property type="entry name" value="LARGE RIBOSOMAL SUBUNIT PROTEIN BL12M"/>
    <property type="match status" value="1"/>
</dbReference>
<dbReference type="Pfam" id="PF00542">
    <property type="entry name" value="Ribosomal_L12"/>
    <property type="match status" value="1"/>
</dbReference>
<dbReference type="Pfam" id="PF16320">
    <property type="entry name" value="Ribosomal_L12_N"/>
    <property type="match status" value="1"/>
</dbReference>
<dbReference type="SUPFAM" id="SSF54736">
    <property type="entry name" value="ClpS-like"/>
    <property type="match status" value="1"/>
</dbReference>
<dbReference type="SUPFAM" id="SSF48300">
    <property type="entry name" value="Ribosomal protein L7/12, oligomerisation (N-terminal) domain"/>
    <property type="match status" value="1"/>
</dbReference>
<name>RL7_PICP2</name>
<comment type="function">
    <text evidence="1">Forms part of the ribosomal stalk which helps the ribosome interact with GTP-bound translation factors. Is thus essential for accurate translation.</text>
</comment>
<comment type="subunit">
    <text evidence="1">Homodimer. Part of the ribosomal stalk of the 50S ribosomal subunit. Forms a multimeric L10(L12)X complex, where L10 forms an elongated spine to which 2 to 4 L12 dimers bind in a sequential fashion. Binds GTP-bound translation factors.</text>
</comment>
<comment type="similarity">
    <text evidence="1">Belongs to the bacterial ribosomal protein bL12 family.</text>
</comment>
<gene>
    <name evidence="1" type="primary">rplL</name>
    <name evidence="1" type="synonym">rpl12</name>
    <name type="ordered locus">SYNPCC7002_A1026</name>
</gene>
<reference key="1">
    <citation type="submission" date="2008-02" db="EMBL/GenBank/DDBJ databases">
        <title>Complete sequence of Synechococcus sp. PCC 7002.</title>
        <authorList>
            <person name="Li T."/>
            <person name="Zhao J."/>
            <person name="Zhao C."/>
            <person name="Liu Z."/>
            <person name="Zhao F."/>
            <person name="Marquardt J."/>
            <person name="Nomura C.T."/>
            <person name="Persson S."/>
            <person name="Detter J.C."/>
            <person name="Richardson P.M."/>
            <person name="Lanz C."/>
            <person name="Schuster S.C."/>
            <person name="Wang J."/>
            <person name="Li S."/>
            <person name="Huang X."/>
            <person name="Cai T."/>
            <person name="Yu Z."/>
            <person name="Luo J."/>
            <person name="Zhao J."/>
            <person name="Bryant D.A."/>
        </authorList>
    </citation>
    <scope>NUCLEOTIDE SEQUENCE [LARGE SCALE GENOMIC DNA]</scope>
    <source>
        <strain>ATCC 27264 / PCC 7002 / PR-6</strain>
    </source>
</reference>
<evidence type="ECO:0000255" key="1">
    <source>
        <dbReference type="HAMAP-Rule" id="MF_00368"/>
    </source>
</evidence>
<evidence type="ECO:0000305" key="2"/>
<accession>B1XJG9</accession>
<feature type="chain" id="PRO_1000121497" description="Large ribosomal subunit protein bL12">
    <location>
        <begin position="1"/>
        <end position="128"/>
    </location>
</feature>
<sequence length="128" mass="13376">MSATTDEILEKLQSLTLLEAAELVKQIEETFGVSAAAPVGGMVMAAPGAAAAEEVEEKTEFDVILDEVPADKKIAVLKVVRGITGLGLKEAKEMVESAPKPIKEATGKEDAEAIKKQLEDAGAKASVK</sequence>
<proteinExistence type="inferred from homology"/>